<organism>
    <name type="scientific">Atrax robustus</name>
    <name type="common">Sydney funnel-web spider</name>
    <dbReference type="NCBI Taxonomy" id="6903"/>
    <lineage>
        <taxon>Eukaryota</taxon>
        <taxon>Metazoa</taxon>
        <taxon>Ecdysozoa</taxon>
        <taxon>Arthropoda</taxon>
        <taxon>Chelicerata</taxon>
        <taxon>Arachnida</taxon>
        <taxon>Araneae</taxon>
        <taxon>Mygalomorphae</taxon>
        <taxon>Hexathelidae</taxon>
        <taxon>Atrax</taxon>
    </lineage>
</organism>
<dbReference type="EMBL" id="HG001293">
    <property type="protein sequence ID" value="CDF44154.1"/>
    <property type="molecule type" value="mRNA"/>
</dbReference>
<dbReference type="EMBL" id="HG001295">
    <property type="protein sequence ID" value="CDF44156.1"/>
    <property type="molecule type" value="mRNA"/>
</dbReference>
<dbReference type="EMBL" id="HG001296">
    <property type="protein sequence ID" value="CDF44157.1"/>
    <property type="molecule type" value="mRNA"/>
</dbReference>
<dbReference type="EMBL" id="HG001297">
    <property type="protein sequence ID" value="CDF44158.1"/>
    <property type="molecule type" value="mRNA"/>
</dbReference>
<dbReference type="SMR" id="S0F1M6"/>
<dbReference type="GO" id="GO:0005576">
    <property type="term" value="C:extracellular region"/>
    <property type="evidence" value="ECO:0007669"/>
    <property type="project" value="UniProtKB-SubCell"/>
</dbReference>
<dbReference type="GO" id="GO:0099106">
    <property type="term" value="F:ion channel regulator activity"/>
    <property type="evidence" value="ECO:0007669"/>
    <property type="project" value="UniProtKB-KW"/>
</dbReference>
<dbReference type="GO" id="GO:0090729">
    <property type="term" value="F:toxin activity"/>
    <property type="evidence" value="ECO:0007669"/>
    <property type="project" value="UniProtKB-KW"/>
</dbReference>
<comment type="function">
    <text evidence="4">Toxin that may inhibit ion channels.</text>
</comment>
<comment type="subcellular location">
    <subcellularLocation>
        <location evidence="5">Secreted</location>
    </subcellularLocation>
</comment>
<comment type="tissue specificity">
    <text evidence="5">Expressed by the venom gland.</text>
</comment>
<comment type="domain">
    <text evidence="1">The presence of a 'disulfide through disulfide knot' structurally defines this protein as a knottin.</text>
</comment>
<comment type="miscellaneous">
    <text evidence="5">Several paralogs that code for the same precursor are shown in this entry, whereas an additional paralog is shown in AC S0F1N2.</text>
</comment>
<comment type="similarity">
    <text evidence="4">Belongs to the neurotoxin 08 (Shiva) family. 02 (omega/kappa toxin) subfamily.</text>
</comment>
<accession>S0F1M6</accession>
<protein>
    <recommendedName>
        <fullName evidence="3">Omega/kappa-hexatoxin-Ar1g</fullName>
    </recommendedName>
</protein>
<name>TOK1G_ATRRO</name>
<sequence>MNTATGFIVLLVLATVLGGIEAGESHMRKDAMGRVRRQYCVPVDQPCSLNTQPCCDDATCTQELNENDNTVYYCRA</sequence>
<reference key="1">
    <citation type="journal article" date="2014" name="BMC Genomics">
        <title>Diversification of a single ancestral gene into a successful toxin superfamily in highly venomous Australian funnel-web spiders.</title>
        <authorList>
            <person name="Pineda S.S."/>
            <person name="Sollod B.L."/>
            <person name="Wilson D."/>
            <person name="Darling A."/>
            <person name="Sunagar K."/>
            <person name="Undheim E.A."/>
            <person name="Kely L."/>
            <person name="Antunes A."/>
            <person name="Fry B.G."/>
            <person name="King G.F."/>
        </authorList>
    </citation>
    <scope>NUCLEOTIDE SEQUENCE [MRNA]</scope>
    <source>
        <tissue>Venom gland</tissue>
    </source>
</reference>
<proteinExistence type="inferred from homology"/>
<keyword id="KW-0165">Cleavage on pair of basic residues</keyword>
<keyword id="KW-1015">Disulfide bond</keyword>
<keyword id="KW-0872">Ion channel impairing toxin</keyword>
<keyword id="KW-0960">Knottin</keyword>
<keyword id="KW-0964">Secreted</keyword>
<keyword id="KW-0732">Signal</keyword>
<keyword id="KW-0800">Toxin</keyword>
<feature type="signal peptide" evidence="2">
    <location>
        <begin position="1"/>
        <end position="22"/>
    </location>
</feature>
<feature type="propeptide" id="PRO_0000430896" evidence="1">
    <location>
        <begin position="23"/>
        <end position="35"/>
    </location>
</feature>
<feature type="chain" id="PRO_0000430897" description="Omega/kappa-hexatoxin-Ar1g">
    <location>
        <begin position="38"/>
        <end position="76"/>
    </location>
</feature>
<feature type="disulfide bond" evidence="1">
    <location>
        <begin position="40"/>
        <end position="55"/>
    </location>
</feature>
<feature type="disulfide bond" evidence="1">
    <location>
        <begin position="47"/>
        <end position="60"/>
    </location>
</feature>
<feature type="disulfide bond" evidence="1">
    <location>
        <begin position="54"/>
        <end position="74"/>
    </location>
</feature>
<evidence type="ECO:0000250" key="1"/>
<evidence type="ECO:0000255" key="2"/>
<evidence type="ECO:0000303" key="3">
    <source>
    </source>
</evidence>
<evidence type="ECO:0000305" key="4"/>
<evidence type="ECO:0000305" key="5">
    <source>
    </source>
</evidence>